<feature type="chain" id="PRO_0000207281" description="Zinc transporter ZupT">
    <location>
        <begin position="1"/>
        <end position="272"/>
    </location>
</feature>
<feature type="transmembrane region" description="Helical" evidence="1">
    <location>
        <begin position="11"/>
        <end position="31"/>
    </location>
</feature>
<feature type="transmembrane region" description="Helical" evidence="1">
    <location>
        <begin position="40"/>
        <end position="60"/>
    </location>
</feature>
<feature type="transmembrane region" description="Helical" evidence="1">
    <location>
        <begin position="76"/>
        <end position="96"/>
    </location>
</feature>
<feature type="transmembrane region" description="Helical" evidence="1">
    <location>
        <begin position="126"/>
        <end position="146"/>
    </location>
</feature>
<feature type="transmembrane region" description="Helical" evidence="1">
    <location>
        <begin position="158"/>
        <end position="178"/>
    </location>
</feature>
<feature type="transmembrane region" description="Helical" evidence="1">
    <location>
        <begin position="189"/>
        <end position="209"/>
    </location>
</feature>
<feature type="transmembrane region" description="Helical" evidence="1">
    <location>
        <begin position="211"/>
        <end position="231"/>
    </location>
</feature>
<feature type="transmembrane region" description="Helical" evidence="1">
    <location>
        <begin position="250"/>
        <end position="270"/>
    </location>
</feature>
<feature type="binding site" description="M2 metal binding site" evidence="1">
    <location>
        <position position="136"/>
    </location>
    <ligand>
        <name>Fe(2+)</name>
        <dbReference type="ChEBI" id="CHEBI:29033"/>
    </ligand>
</feature>
<feature type="binding site" description="M2 metal binding site" evidence="1">
    <location>
        <position position="139"/>
    </location>
    <ligand>
        <name>Fe(2+)</name>
        <dbReference type="ChEBI" id="CHEBI:29033"/>
    </ligand>
</feature>
<feature type="binding site" description="M1 metal binding site" evidence="1">
    <location>
        <position position="139"/>
    </location>
    <ligand>
        <name>Zn(2+)</name>
        <dbReference type="ChEBI" id="CHEBI:29105"/>
    </ligand>
</feature>
<feature type="binding site" description="M1 metal binding site" evidence="1">
    <location>
        <position position="164"/>
    </location>
    <ligand>
        <name>Zn(2+)</name>
        <dbReference type="ChEBI" id="CHEBI:29105"/>
    </ligand>
</feature>
<feature type="binding site" description="M2 metal binding site" evidence="1">
    <location>
        <position position="165"/>
    </location>
    <ligand>
        <name>Fe(2+)</name>
        <dbReference type="ChEBI" id="CHEBI:29033"/>
    </ligand>
</feature>
<feature type="binding site" description="M2 metal binding site" evidence="1">
    <location>
        <position position="168"/>
    </location>
    <ligand>
        <name>Fe(2+)</name>
        <dbReference type="ChEBI" id="CHEBI:29033"/>
    </ligand>
</feature>
<feature type="binding site" description="M1 metal binding site" evidence="1">
    <location>
        <position position="168"/>
    </location>
    <ligand>
        <name>Zn(2+)</name>
        <dbReference type="ChEBI" id="CHEBI:29105"/>
    </ligand>
</feature>
<feature type="binding site" description="M2 metal binding site" evidence="1">
    <location>
        <position position="197"/>
    </location>
    <ligand>
        <name>Fe(2+)</name>
        <dbReference type="ChEBI" id="CHEBI:29033"/>
    </ligand>
</feature>
<protein>
    <recommendedName>
        <fullName evidence="1">Zinc transporter ZupT</fullName>
    </recommendedName>
</protein>
<evidence type="ECO:0000255" key="1">
    <source>
        <dbReference type="HAMAP-Rule" id="MF_00548"/>
    </source>
</evidence>
<reference key="1">
    <citation type="journal article" date="2002" name="Nature">
        <title>Comparison of the genomes of two Xanthomonas pathogens with differing host specificities.</title>
        <authorList>
            <person name="da Silva A.C.R."/>
            <person name="Ferro J.A."/>
            <person name="Reinach F.C."/>
            <person name="Farah C.S."/>
            <person name="Furlan L.R."/>
            <person name="Quaggio R.B."/>
            <person name="Monteiro-Vitorello C.B."/>
            <person name="Van Sluys M.A."/>
            <person name="Almeida N.F. Jr."/>
            <person name="Alves L.M.C."/>
            <person name="do Amaral A.M."/>
            <person name="Bertolini M.C."/>
            <person name="Camargo L.E.A."/>
            <person name="Camarotte G."/>
            <person name="Cannavan F."/>
            <person name="Cardozo J."/>
            <person name="Chambergo F."/>
            <person name="Ciapina L.P."/>
            <person name="Cicarelli R.M.B."/>
            <person name="Coutinho L.L."/>
            <person name="Cursino-Santos J.R."/>
            <person name="El-Dorry H."/>
            <person name="Faria J.B."/>
            <person name="Ferreira A.J.S."/>
            <person name="Ferreira R.C.C."/>
            <person name="Ferro M.I.T."/>
            <person name="Formighieri E.F."/>
            <person name="Franco M.C."/>
            <person name="Greggio C.C."/>
            <person name="Gruber A."/>
            <person name="Katsuyama A.M."/>
            <person name="Kishi L.T."/>
            <person name="Leite R.P."/>
            <person name="Lemos E.G.M."/>
            <person name="Lemos M.V.F."/>
            <person name="Locali E.C."/>
            <person name="Machado M.A."/>
            <person name="Madeira A.M.B.N."/>
            <person name="Martinez-Rossi N.M."/>
            <person name="Martins E.C."/>
            <person name="Meidanis J."/>
            <person name="Menck C.F.M."/>
            <person name="Miyaki C.Y."/>
            <person name="Moon D.H."/>
            <person name="Moreira L.M."/>
            <person name="Novo M.T.M."/>
            <person name="Okura V.K."/>
            <person name="Oliveira M.C."/>
            <person name="Oliveira V.R."/>
            <person name="Pereira H.A."/>
            <person name="Rossi A."/>
            <person name="Sena J.A.D."/>
            <person name="Silva C."/>
            <person name="de Souza R.F."/>
            <person name="Spinola L.A.F."/>
            <person name="Takita M.A."/>
            <person name="Tamura R.E."/>
            <person name="Teixeira E.C."/>
            <person name="Tezza R.I.D."/>
            <person name="Trindade dos Santos M."/>
            <person name="Truffi D."/>
            <person name="Tsai S.M."/>
            <person name="White F.F."/>
            <person name="Setubal J.C."/>
            <person name="Kitajima J.P."/>
        </authorList>
    </citation>
    <scope>NUCLEOTIDE SEQUENCE [LARGE SCALE GENOMIC DNA]</scope>
    <source>
        <strain>306</strain>
    </source>
</reference>
<gene>
    <name evidence="1" type="primary">zupT</name>
    <name type="ordered locus">XAC2114</name>
</gene>
<keyword id="KW-0997">Cell inner membrane</keyword>
<keyword id="KW-1003">Cell membrane</keyword>
<keyword id="KW-0406">Ion transport</keyword>
<keyword id="KW-0408">Iron</keyword>
<keyword id="KW-0472">Membrane</keyword>
<keyword id="KW-0479">Metal-binding</keyword>
<keyword id="KW-0812">Transmembrane</keyword>
<keyword id="KW-1133">Transmembrane helix</keyword>
<keyword id="KW-0813">Transport</keyword>
<keyword id="KW-0862">Zinc</keyword>
<keyword id="KW-0864">Zinc transport</keyword>
<proteinExistence type="inferred from homology"/>
<organism>
    <name type="scientific">Xanthomonas axonopodis pv. citri (strain 306)</name>
    <dbReference type="NCBI Taxonomy" id="190486"/>
    <lineage>
        <taxon>Bacteria</taxon>
        <taxon>Pseudomonadati</taxon>
        <taxon>Pseudomonadota</taxon>
        <taxon>Gammaproteobacteria</taxon>
        <taxon>Lysobacterales</taxon>
        <taxon>Lysobacteraceae</taxon>
        <taxon>Xanthomonas</taxon>
    </lineage>
</organism>
<accession>Q8PKQ5</accession>
<sequence length="272" mass="28665">MLAVSSHNLWIALAVTLAAGLATGLGSLMVVFAKKPNPRLLAFGLAFAGGAMVYVSLTEILNKSIAAFSQAYNDKLGFTFGTLTFLGGMLLIMVIDRLVPNPHQSLSSDDPQFREDNRAYIRRVGLMTAVAITAHNFPEGLATFFATLESPAVGMPLAFAIAIHNIPEGIAIAVPVYFATRNKFYAVGASLLSGLAEPVGAGIGYLALFSVLSDAVFGTVFGLISGVMVFLALDELLPAAKRYAQGHETVYGLVSGMGTLAISLVLFRFATP</sequence>
<comment type="function">
    <text evidence="1">Mediates zinc uptake. May also transport other divalent cations.</text>
</comment>
<comment type="catalytic activity">
    <reaction evidence="1">
        <text>Zn(2+)(in) = Zn(2+)(out)</text>
        <dbReference type="Rhea" id="RHEA:29351"/>
        <dbReference type="ChEBI" id="CHEBI:29105"/>
    </reaction>
</comment>
<comment type="subcellular location">
    <subcellularLocation>
        <location evidence="1">Cell inner membrane</location>
        <topology evidence="1">Multi-pass membrane protein</topology>
    </subcellularLocation>
</comment>
<comment type="similarity">
    <text evidence="1">Belongs to the ZIP transporter (TC 2.A.5) family. ZupT subfamily.</text>
</comment>
<name>ZUPT_XANAC</name>
<dbReference type="EMBL" id="AE008923">
    <property type="protein sequence ID" value="AAM36967.1"/>
    <property type="molecule type" value="Genomic_DNA"/>
</dbReference>
<dbReference type="RefSeq" id="WP_003489216.1">
    <property type="nucleotide sequence ID" value="NC_003919.1"/>
</dbReference>
<dbReference type="SMR" id="Q8PKQ5"/>
<dbReference type="GeneID" id="66911246"/>
<dbReference type="KEGG" id="xac:XAC2114"/>
<dbReference type="eggNOG" id="COG0428">
    <property type="taxonomic scope" value="Bacteria"/>
</dbReference>
<dbReference type="HOGENOM" id="CLU_015114_1_3_6"/>
<dbReference type="Proteomes" id="UP000000576">
    <property type="component" value="Chromosome"/>
</dbReference>
<dbReference type="GO" id="GO:0005886">
    <property type="term" value="C:plasma membrane"/>
    <property type="evidence" value="ECO:0007669"/>
    <property type="project" value="UniProtKB-SubCell"/>
</dbReference>
<dbReference type="GO" id="GO:0046872">
    <property type="term" value="F:metal ion binding"/>
    <property type="evidence" value="ECO:0007669"/>
    <property type="project" value="UniProtKB-KW"/>
</dbReference>
<dbReference type="GO" id="GO:0005385">
    <property type="term" value="F:zinc ion transmembrane transporter activity"/>
    <property type="evidence" value="ECO:0007669"/>
    <property type="project" value="UniProtKB-UniRule"/>
</dbReference>
<dbReference type="HAMAP" id="MF_00548">
    <property type="entry name" value="ZupT"/>
    <property type="match status" value="1"/>
</dbReference>
<dbReference type="InterPro" id="IPR003689">
    <property type="entry name" value="ZIP"/>
</dbReference>
<dbReference type="InterPro" id="IPR023498">
    <property type="entry name" value="Zn_transptr_ZupT"/>
</dbReference>
<dbReference type="NCBIfam" id="NF003243">
    <property type="entry name" value="PRK04201.1"/>
    <property type="match status" value="1"/>
</dbReference>
<dbReference type="PANTHER" id="PTHR11040:SF205">
    <property type="entry name" value="ZINC TRANSPORTER ZUPT"/>
    <property type="match status" value="1"/>
</dbReference>
<dbReference type="PANTHER" id="PTHR11040">
    <property type="entry name" value="ZINC/IRON TRANSPORTER"/>
    <property type="match status" value="1"/>
</dbReference>
<dbReference type="Pfam" id="PF02535">
    <property type="entry name" value="Zip"/>
    <property type="match status" value="1"/>
</dbReference>